<reference key="1">
    <citation type="journal article" date="2017" name="Plant J.">
        <title>Araport11: a complete reannotation of the Arabidopsis thaliana reference genome.</title>
        <authorList>
            <person name="Cheng C.Y."/>
            <person name="Krishnakumar V."/>
            <person name="Chan A.P."/>
            <person name="Thibaud-Nissen F."/>
            <person name="Schobel S."/>
            <person name="Town C.D."/>
        </authorList>
    </citation>
    <scope>GENOME REANNOTATION</scope>
    <source>
        <strain>cv. Columbia</strain>
    </source>
</reference>
<reference key="2">
    <citation type="journal article" date="2003" name="Science">
        <title>Empirical analysis of transcriptional activity in the Arabidopsis genome.</title>
        <authorList>
            <person name="Yamada K."/>
            <person name="Lim J."/>
            <person name="Dale J.M."/>
            <person name="Chen H."/>
            <person name="Shinn P."/>
            <person name="Palm C.J."/>
            <person name="Southwick A.M."/>
            <person name="Wu H.C."/>
            <person name="Kim C.J."/>
            <person name="Nguyen M."/>
            <person name="Pham P.K."/>
            <person name="Cheuk R.F."/>
            <person name="Karlin-Newmann G."/>
            <person name="Liu S.X."/>
            <person name="Lam B."/>
            <person name="Sakano H."/>
            <person name="Wu T."/>
            <person name="Yu G."/>
            <person name="Miranda M."/>
            <person name="Quach H.L."/>
            <person name="Tripp M."/>
            <person name="Chang C.H."/>
            <person name="Lee J.M."/>
            <person name="Toriumi M.J."/>
            <person name="Chan M.M."/>
            <person name="Tang C.C."/>
            <person name="Onodera C.S."/>
            <person name="Deng J.M."/>
            <person name="Akiyama K."/>
            <person name="Ansari Y."/>
            <person name="Arakawa T."/>
            <person name="Banh J."/>
            <person name="Banno F."/>
            <person name="Bowser L."/>
            <person name="Brooks S.Y."/>
            <person name="Carninci P."/>
            <person name="Chao Q."/>
            <person name="Choy N."/>
            <person name="Enju A."/>
            <person name="Goldsmith A.D."/>
            <person name="Gurjal M."/>
            <person name="Hansen N.F."/>
            <person name="Hayashizaki Y."/>
            <person name="Johnson-Hopson C."/>
            <person name="Hsuan V.W."/>
            <person name="Iida K."/>
            <person name="Karnes M."/>
            <person name="Khan S."/>
            <person name="Koesema E."/>
            <person name="Ishida J."/>
            <person name="Jiang P.X."/>
            <person name="Jones T."/>
            <person name="Kawai J."/>
            <person name="Kamiya A."/>
            <person name="Meyers C."/>
            <person name="Nakajima M."/>
            <person name="Narusaka M."/>
            <person name="Seki M."/>
            <person name="Sakurai T."/>
            <person name="Satou M."/>
            <person name="Tamse R."/>
            <person name="Vaysberg M."/>
            <person name="Wallender E.K."/>
            <person name="Wong C."/>
            <person name="Yamamura Y."/>
            <person name="Yuan S."/>
            <person name="Shinozaki K."/>
            <person name="Davis R.W."/>
            <person name="Theologis A."/>
            <person name="Ecker J.R."/>
        </authorList>
    </citation>
    <scope>NUCLEOTIDE SEQUENCE [LARGE SCALE MRNA]</scope>
    <source>
        <strain>cv. Columbia</strain>
    </source>
</reference>
<reference key="3">
    <citation type="journal article" date="2013" name="Plant Cell">
        <title>Trans-Golgi network localized ECHIDNA/Ypt interacting protein complex is required for the secretion of cell wall polysaccharides in Arabidopsis.</title>
        <authorList>
            <person name="Gendre D."/>
            <person name="McFarlane H.E."/>
            <person name="Johnson E."/>
            <person name="Mouille G."/>
            <person name="Sjoedin A."/>
            <person name="Oh J."/>
            <person name="Levesque-Tremblay G."/>
            <person name="Watanabe Y."/>
            <person name="Samuels L."/>
            <person name="Bhalerao R.P."/>
        </authorList>
    </citation>
    <scope>FUNCTION</scope>
    <scope>DISRUPTION PHENOTYPE</scope>
    <scope>SUBCELLULAR LOCATION</scope>
    <scope>SUBUNIT</scope>
    <scope>INTERACTION WITH YIP4A AND ECH</scope>
    <source>
        <strain>cv. Columbia</strain>
    </source>
</reference>
<reference key="4">
    <citation type="journal article" date="2019" name="Development">
        <title>Rho-of-plant activated root hair formation requires Arabidopsis YIP4a/b gene function.</title>
        <authorList>
            <person name="Gendre D."/>
            <person name="Baral A."/>
            <person name="Dang X."/>
            <person name="Esnay N."/>
            <person name="Boutte Y."/>
            <person name="Stanislas T."/>
            <person name="Vain T."/>
            <person name="Claverol S."/>
            <person name="Gustavsson A."/>
            <person name="Lin D."/>
            <person name="Grebe M."/>
            <person name="Bhalerao R.P."/>
        </authorList>
    </citation>
    <scope>FUNCTION</scope>
    <scope>DISRUPTION PHENOTYPE</scope>
    <scope>TISSUE SPECIFICITY</scope>
    <scope>DEVELOPMENTAL STAGE</scope>
    <source>
        <strain>cv. Columbia</strain>
    </source>
</reference>
<organism>
    <name type="scientific">Arabidopsis thaliana</name>
    <name type="common">Mouse-ear cress</name>
    <dbReference type="NCBI Taxonomy" id="3702"/>
    <lineage>
        <taxon>Eukaryota</taxon>
        <taxon>Viridiplantae</taxon>
        <taxon>Streptophyta</taxon>
        <taxon>Embryophyta</taxon>
        <taxon>Tracheophyta</taxon>
        <taxon>Spermatophyta</taxon>
        <taxon>Magnoliopsida</taxon>
        <taxon>eudicotyledons</taxon>
        <taxon>Gunneridae</taxon>
        <taxon>Pentapetalae</taxon>
        <taxon>rosids</taxon>
        <taxon>malvids</taxon>
        <taxon>Brassicales</taxon>
        <taxon>Brassicaceae</taxon>
        <taxon>Camelineae</taxon>
        <taxon>Arabidopsis</taxon>
    </lineage>
</organism>
<feature type="chain" id="PRO_0000450870" description="Protein YIP4b">
    <location>
        <begin position="1"/>
        <end position="280"/>
    </location>
</feature>
<feature type="topological domain" description="Cytoplasmic" evidence="6">
    <location>
        <begin position="1"/>
        <end position="146"/>
    </location>
</feature>
<feature type="transmembrane region" description="Helical" evidence="1">
    <location>
        <begin position="147"/>
        <end position="167"/>
    </location>
</feature>
<feature type="topological domain" description="Lumenal" evidence="6">
    <location>
        <begin position="168"/>
        <end position="171"/>
    </location>
</feature>
<feature type="transmembrane region" description="Helical" evidence="1">
    <location>
        <begin position="172"/>
        <end position="192"/>
    </location>
</feature>
<feature type="transmembrane region" description="Helical" evidence="1">
    <location>
        <begin position="193"/>
        <end position="213"/>
    </location>
</feature>
<feature type="topological domain" description="Lumenal" evidence="6">
    <location>
        <begin position="214"/>
        <end position="230"/>
    </location>
</feature>
<feature type="transmembrane region" description="Helical" evidence="1">
    <location>
        <begin position="231"/>
        <end position="251"/>
    </location>
</feature>
<feature type="topological domain" description="Cytoplasmic" evidence="6">
    <location>
        <begin position="252"/>
        <end position="258"/>
    </location>
</feature>
<feature type="transmembrane region" description="Helical" evidence="1">
    <location>
        <begin position="259"/>
        <end position="279"/>
    </location>
</feature>
<feature type="topological domain" description="Lumenal" evidence="6">
    <location>
        <position position="280"/>
    </location>
</feature>
<feature type="region of interest" description="Disordered" evidence="2">
    <location>
        <begin position="1"/>
        <end position="106"/>
    </location>
</feature>
<feature type="compositionally biased region" description="Polar residues" evidence="2">
    <location>
        <begin position="1"/>
        <end position="15"/>
    </location>
</feature>
<evidence type="ECO:0000255" key="1"/>
<evidence type="ECO:0000256" key="2">
    <source>
        <dbReference type="SAM" id="MobiDB-lite"/>
    </source>
</evidence>
<evidence type="ECO:0000269" key="3">
    <source>
    </source>
</evidence>
<evidence type="ECO:0000269" key="4">
    <source>
    </source>
</evidence>
<evidence type="ECO:0000303" key="5">
    <source>
    </source>
</evidence>
<evidence type="ECO:0000305" key="6"/>
<evidence type="ECO:0000312" key="7">
    <source>
        <dbReference type="Araport" id="AT4G30260"/>
    </source>
</evidence>
<evidence type="ECO:0000312" key="8">
    <source>
        <dbReference type="EMBL" id="AEE85744.1"/>
    </source>
</evidence>
<gene>
    <name evidence="5" type="primary">YIP4B</name>
    <name evidence="5" type="synonym">YIP2</name>
    <name evidence="7" type="ordered locus">At4g30260</name>
    <name evidence="8" type="ORF">F9N11.110</name>
</gene>
<dbReference type="EMBL" id="CP002687">
    <property type="protein sequence ID" value="AEE85744.1"/>
    <property type="molecule type" value="Genomic_DNA"/>
</dbReference>
<dbReference type="EMBL" id="CP002687">
    <property type="protein sequence ID" value="ANM67107.1"/>
    <property type="molecule type" value="Genomic_DNA"/>
</dbReference>
<dbReference type="EMBL" id="AY045675">
    <property type="protein sequence ID" value="AAK74033.1"/>
    <property type="molecule type" value="mRNA"/>
</dbReference>
<dbReference type="EMBL" id="AY056083">
    <property type="protein sequence ID" value="AAL06971.1"/>
    <property type="molecule type" value="mRNA"/>
</dbReference>
<dbReference type="EMBL" id="AY093179">
    <property type="protein sequence ID" value="AAM13178.1"/>
    <property type="molecule type" value="mRNA"/>
</dbReference>
<dbReference type="RefSeq" id="NP_001320089.1">
    <property type="nucleotide sequence ID" value="NM_001342003.1"/>
</dbReference>
<dbReference type="RefSeq" id="NP_567843.1">
    <property type="nucleotide sequence ID" value="NM_119172.4"/>
</dbReference>
<dbReference type="FunCoup" id="Q93VH1">
    <property type="interactions" value="4128"/>
</dbReference>
<dbReference type="IntAct" id="Q93VH1">
    <property type="interactions" value="6"/>
</dbReference>
<dbReference type="PaxDb" id="3702-AT4G30260.1"/>
<dbReference type="ProteomicsDB" id="185664"/>
<dbReference type="EnsemblPlants" id="AT4G30260.1">
    <property type="protein sequence ID" value="AT4G30260.1"/>
    <property type="gene ID" value="AT4G30260"/>
</dbReference>
<dbReference type="EnsemblPlants" id="AT4G30260.3">
    <property type="protein sequence ID" value="AT4G30260.3"/>
    <property type="gene ID" value="AT4G30260"/>
</dbReference>
<dbReference type="GeneID" id="829149"/>
<dbReference type="Gramene" id="AT4G30260.1">
    <property type="protein sequence ID" value="AT4G30260.1"/>
    <property type="gene ID" value="AT4G30260"/>
</dbReference>
<dbReference type="Gramene" id="AT4G30260.3">
    <property type="protein sequence ID" value="AT4G30260.3"/>
    <property type="gene ID" value="AT4G30260"/>
</dbReference>
<dbReference type="KEGG" id="ath:AT4G30260"/>
<dbReference type="Araport" id="AT4G30260"/>
<dbReference type="TAIR" id="AT4G30260">
    <property type="gene designation" value="YIP4B"/>
</dbReference>
<dbReference type="HOGENOM" id="CLU_059592_2_1_1"/>
<dbReference type="InParanoid" id="Q93VH1"/>
<dbReference type="OMA" id="IKFYHVL"/>
<dbReference type="OrthoDB" id="411251at2759"/>
<dbReference type="PRO" id="PR:Q93VH1"/>
<dbReference type="Proteomes" id="UP000006548">
    <property type="component" value="Chromosome 4"/>
</dbReference>
<dbReference type="ExpressionAtlas" id="Q93VH1">
    <property type="expression patterns" value="baseline and differential"/>
</dbReference>
<dbReference type="GO" id="GO:0005768">
    <property type="term" value="C:endosome"/>
    <property type="evidence" value="ECO:0007005"/>
    <property type="project" value="TAIR"/>
</dbReference>
<dbReference type="GO" id="GO:0005794">
    <property type="term" value="C:Golgi apparatus"/>
    <property type="evidence" value="ECO:0007005"/>
    <property type="project" value="TAIR"/>
</dbReference>
<dbReference type="GO" id="GO:0005886">
    <property type="term" value="C:plasma membrane"/>
    <property type="evidence" value="ECO:0007005"/>
    <property type="project" value="TAIR"/>
</dbReference>
<dbReference type="GO" id="GO:0005802">
    <property type="term" value="C:trans-Golgi network"/>
    <property type="evidence" value="ECO:0000314"/>
    <property type="project" value="TAIR"/>
</dbReference>
<dbReference type="GO" id="GO:0032588">
    <property type="term" value="C:trans-Golgi network membrane"/>
    <property type="evidence" value="ECO:0000314"/>
    <property type="project" value="UniProtKB"/>
</dbReference>
<dbReference type="GO" id="GO:0042803">
    <property type="term" value="F:protein homodimerization activity"/>
    <property type="evidence" value="ECO:0000314"/>
    <property type="project" value="UniProtKB"/>
</dbReference>
<dbReference type="GO" id="GO:0006888">
    <property type="term" value="P:endoplasmic reticulum to Golgi vesicle-mediated transport"/>
    <property type="evidence" value="ECO:0007669"/>
    <property type="project" value="InterPro"/>
</dbReference>
<dbReference type="GO" id="GO:0045489">
    <property type="term" value="P:pectin biosynthetic process"/>
    <property type="evidence" value="ECO:0000315"/>
    <property type="project" value="UniProtKB"/>
</dbReference>
<dbReference type="GO" id="GO:0099402">
    <property type="term" value="P:plant organ development"/>
    <property type="evidence" value="ECO:0000315"/>
    <property type="project" value="UniProtKB"/>
</dbReference>
<dbReference type="GO" id="GO:0052324">
    <property type="term" value="P:plant-type cell wall cellulose biosynthetic process"/>
    <property type="evidence" value="ECO:0000315"/>
    <property type="project" value="UniProtKB"/>
</dbReference>
<dbReference type="GO" id="GO:0015774">
    <property type="term" value="P:polysaccharide transport"/>
    <property type="evidence" value="ECO:0000316"/>
    <property type="project" value="TAIR"/>
</dbReference>
<dbReference type="GO" id="GO:0015031">
    <property type="term" value="P:protein transport"/>
    <property type="evidence" value="ECO:0007669"/>
    <property type="project" value="UniProtKB-KW"/>
</dbReference>
<dbReference type="GO" id="GO:0051223">
    <property type="term" value="P:regulation of protein transport"/>
    <property type="evidence" value="ECO:0000315"/>
    <property type="project" value="UniProtKB"/>
</dbReference>
<dbReference type="GO" id="GO:0048364">
    <property type="term" value="P:root development"/>
    <property type="evidence" value="ECO:0000315"/>
    <property type="project" value="UniProtKB"/>
</dbReference>
<dbReference type="GO" id="GO:0048766">
    <property type="term" value="P:root hair initiation"/>
    <property type="evidence" value="ECO:0000315"/>
    <property type="project" value="UniProtKB"/>
</dbReference>
<dbReference type="GO" id="GO:0009826">
    <property type="term" value="P:unidimensional cell growth"/>
    <property type="evidence" value="ECO:0000315"/>
    <property type="project" value="UniProtKB"/>
</dbReference>
<dbReference type="InterPro" id="IPR045231">
    <property type="entry name" value="Yip1/4-like"/>
</dbReference>
<dbReference type="InterPro" id="IPR006977">
    <property type="entry name" value="Yip1_dom"/>
</dbReference>
<dbReference type="PANTHER" id="PTHR21236">
    <property type="entry name" value="GOLGI MEMBRANE PROTEIN YIP1"/>
    <property type="match status" value="1"/>
</dbReference>
<dbReference type="PANTHER" id="PTHR21236:SF1">
    <property type="entry name" value="PROTEIN YIPF6"/>
    <property type="match status" value="1"/>
</dbReference>
<dbReference type="Pfam" id="PF04893">
    <property type="entry name" value="Yip1"/>
    <property type="match status" value="1"/>
</dbReference>
<protein>
    <recommendedName>
        <fullName evidence="5">Protein YIP4b</fullName>
    </recommendedName>
    <alternativeName>
        <fullName evidence="5">YPT/RAB GTPase-interacting protein 4b</fullName>
        <shortName evidence="5">YIP4b</shortName>
    </alternativeName>
</protein>
<comment type="function">
    <text evidence="3 4">Together with YIP4A, involved in the regulation of cell elongation during root and hypocotyl growth (PubMed:23832588). YIP4A and YIP4B are central trafficking components in Rho-of-plant (ROPs, e.g. ARAC4/ROP2, ARAC5/ROP4 and ARAC3/ROP6) small GTPases-dependent root hair formation, thus contributing to activation and plasma membrane accumulation of ROPs during hair initiation (PubMed:30770391). The ECH/YIP4 complex is involved in the modulation of the trans-Golgi network (TGN)-mediated trafficking of some proteins and cell wall components (e.g. pectin and hemicellulose) to the cell wall in dark-grown hypocotyls and in secretory cells of the seed coat (PubMed:23832588).</text>
</comment>
<comment type="subunit">
    <text evidence="3">Homodimer and heterodimer with YIP4A (PubMed:23832588). Component of a trans-Golgi network (TGN)-localized ECH/YIP4 complex made of ECH, YIP4A and YIP4B (PubMed:23832588). Interacts directly with ECH (PubMed:23832588).</text>
</comment>
<comment type="interaction">
    <interactant intactId="EBI-4430553">
        <id>Q93VH1</id>
    </interactant>
    <interactant intactId="EBI-4425753">
        <id>Q8GWB3</id>
        <label>At3g05280</label>
    </interactant>
    <organismsDiffer>false</organismsDiffer>
    <experiments>3</experiments>
</comment>
<comment type="subcellular location">
    <subcellularLocation>
        <location evidence="3">Golgi apparatus</location>
        <location evidence="3">trans-Golgi network membrane</location>
        <topology evidence="1">Multi-pass membrane protein</topology>
    </subcellularLocation>
</comment>
<comment type="tissue specificity">
    <text evidence="4">Expressed in developing root hair cells.</text>
</comment>
<comment type="developmental stage">
    <text evidence="4">Ubiquitous expression in elongating root hair and non-hair cells prior to hair formation.</text>
</comment>
<comment type="disruption phenotype">
    <text evidence="3 4">No visible phenotype (PubMed:23832588). The double mutant yip4a yip4b exhibits disturbed trans-Golgi network (TGN)-Golgi association and cell elongation defects leading to reduced roots and hypocotyls growth associated with an abnormal cell wall composition and a mislocalization of trans-Golgi network (TGN)-localized proteins SYP61 and VHA-a1 (PubMed:23832588, PubMed:30770391). The double mutant yip4a yip4b also has a reduced number of root trichoblasts displaying Rho-of-plant (ROPs e.g. ARAC4/ROP2, ARAC5/ROP4 and ARAC3/ROP6) patches and leading to an almost complete absence of root hairs (PubMed:30770391).</text>
</comment>
<comment type="similarity">
    <text evidence="6">Belongs to the YIP1 family.</text>
</comment>
<accession>Q93VH1</accession>
<accession>A0A178V3Z0</accession>
<proteinExistence type="evidence at protein level"/>
<name>YIP4B_ARATH</name>
<sequence>MSHNDTIPLYQSSQSDIDEIENMMNDSFQSGPGTVLPARPPSPIRPSIPVSSSPFVQSNLPPLPPSSSSSTQKVMPVPAPPPLPSAGNEGNKSIGGSGFGSPPNTLTEPVWDTVKRDLSRIVSNLKLVVFPNPYREDPGKALRDWDLWGPFFFIVFLGLTLSWSASVKKSEVFAVAFALLAAGAVILTLNVLLLGGHIIFFQSLSLLGYCLFPLDVGAVICMLKDNVILKMVVVSVTLAWSSWAAYPFMSAAVNPRRKALALYPVFLMYVSVGFLIIAIN</sequence>
<keyword id="KW-0961">Cell wall biogenesis/degradation</keyword>
<keyword id="KW-0333">Golgi apparatus</keyword>
<keyword id="KW-0472">Membrane</keyword>
<keyword id="KW-0653">Protein transport</keyword>
<keyword id="KW-1185">Reference proteome</keyword>
<keyword id="KW-0812">Transmembrane</keyword>
<keyword id="KW-1133">Transmembrane helix</keyword>
<keyword id="KW-0813">Transport</keyword>